<dbReference type="EMBL" id="AE017220">
    <property type="protein sequence ID" value="AAX67687.1"/>
    <property type="molecule type" value="Genomic_DNA"/>
</dbReference>
<dbReference type="RefSeq" id="WP_001052212.1">
    <property type="nucleotide sequence ID" value="NC_006905.1"/>
</dbReference>
<dbReference type="SMR" id="Q57HX5"/>
<dbReference type="GeneID" id="66758158"/>
<dbReference type="KEGG" id="sec:SCH_3781"/>
<dbReference type="HOGENOM" id="CLU_079215_4_5_6"/>
<dbReference type="Proteomes" id="UP000000538">
    <property type="component" value="Chromosome"/>
</dbReference>
<dbReference type="GO" id="GO:0005886">
    <property type="term" value="C:plasma membrane"/>
    <property type="evidence" value="ECO:0007669"/>
    <property type="project" value="UniProtKB-SubCell"/>
</dbReference>
<dbReference type="GO" id="GO:0045259">
    <property type="term" value="C:proton-transporting ATP synthase complex"/>
    <property type="evidence" value="ECO:0007669"/>
    <property type="project" value="UniProtKB-KW"/>
</dbReference>
<dbReference type="GO" id="GO:0046933">
    <property type="term" value="F:proton-transporting ATP synthase activity, rotational mechanism"/>
    <property type="evidence" value="ECO:0007669"/>
    <property type="project" value="UniProtKB-UniRule"/>
</dbReference>
<dbReference type="GO" id="GO:0046961">
    <property type="term" value="F:proton-transporting ATPase activity, rotational mechanism"/>
    <property type="evidence" value="ECO:0007669"/>
    <property type="project" value="TreeGrafter"/>
</dbReference>
<dbReference type="CDD" id="cd06503">
    <property type="entry name" value="ATP-synt_Fo_b"/>
    <property type="match status" value="1"/>
</dbReference>
<dbReference type="FunFam" id="1.20.5.620:FF:000001">
    <property type="entry name" value="ATP synthase subunit b"/>
    <property type="match status" value="1"/>
</dbReference>
<dbReference type="Gene3D" id="1.20.5.620">
    <property type="entry name" value="F1F0 ATP synthase subunit B, membrane domain"/>
    <property type="match status" value="1"/>
</dbReference>
<dbReference type="HAMAP" id="MF_01398">
    <property type="entry name" value="ATP_synth_b_bprime"/>
    <property type="match status" value="1"/>
</dbReference>
<dbReference type="InterPro" id="IPR028987">
    <property type="entry name" value="ATP_synth_B-like_membr_sf"/>
</dbReference>
<dbReference type="InterPro" id="IPR002146">
    <property type="entry name" value="ATP_synth_b/b'su_bac/chlpt"/>
</dbReference>
<dbReference type="InterPro" id="IPR005864">
    <property type="entry name" value="ATP_synth_F0_bsu_bac"/>
</dbReference>
<dbReference type="InterPro" id="IPR050059">
    <property type="entry name" value="ATP_synthase_B_chain"/>
</dbReference>
<dbReference type="NCBIfam" id="TIGR01144">
    <property type="entry name" value="ATP_synt_b"/>
    <property type="match status" value="1"/>
</dbReference>
<dbReference type="NCBIfam" id="NF004411">
    <property type="entry name" value="PRK05759.1-2"/>
    <property type="match status" value="1"/>
</dbReference>
<dbReference type="NCBIfam" id="NF004413">
    <property type="entry name" value="PRK05759.1-4"/>
    <property type="match status" value="1"/>
</dbReference>
<dbReference type="PANTHER" id="PTHR33445:SF1">
    <property type="entry name" value="ATP SYNTHASE SUBUNIT B"/>
    <property type="match status" value="1"/>
</dbReference>
<dbReference type="PANTHER" id="PTHR33445">
    <property type="entry name" value="ATP SYNTHASE SUBUNIT B', CHLOROPLASTIC"/>
    <property type="match status" value="1"/>
</dbReference>
<dbReference type="Pfam" id="PF00430">
    <property type="entry name" value="ATP-synt_B"/>
    <property type="match status" value="1"/>
</dbReference>
<dbReference type="SUPFAM" id="SSF81573">
    <property type="entry name" value="F1F0 ATP synthase subunit B, membrane domain"/>
    <property type="match status" value="1"/>
</dbReference>
<feature type="chain" id="PRO_0000368741" description="ATP synthase subunit b">
    <location>
        <begin position="1"/>
        <end position="156"/>
    </location>
</feature>
<feature type="transmembrane region" description="Helical" evidence="1">
    <location>
        <begin position="11"/>
        <end position="31"/>
    </location>
</feature>
<proteinExistence type="inferred from homology"/>
<organism>
    <name type="scientific">Salmonella choleraesuis (strain SC-B67)</name>
    <dbReference type="NCBI Taxonomy" id="321314"/>
    <lineage>
        <taxon>Bacteria</taxon>
        <taxon>Pseudomonadati</taxon>
        <taxon>Pseudomonadota</taxon>
        <taxon>Gammaproteobacteria</taxon>
        <taxon>Enterobacterales</taxon>
        <taxon>Enterobacteriaceae</taxon>
        <taxon>Salmonella</taxon>
    </lineage>
</organism>
<comment type="function">
    <text evidence="1">F(1)F(0) ATP synthase produces ATP from ADP in the presence of a proton or sodium gradient. F-type ATPases consist of two structural domains, F(1) containing the extramembraneous catalytic core and F(0) containing the membrane proton channel, linked together by a central stalk and a peripheral stalk. During catalysis, ATP synthesis in the catalytic domain of F(1) is coupled via a rotary mechanism of the central stalk subunits to proton translocation.</text>
</comment>
<comment type="function">
    <text evidence="1">Component of the F(0) channel, it forms part of the peripheral stalk, linking F(1) to F(0).</text>
</comment>
<comment type="subunit">
    <text evidence="1">F-type ATPases have 2 components, F(1) - the catalytic core - and F(0) - the membrane proton channel. F(1) has five subunits: alpha(3), beta(3), gamma(1), delta(1), epsilon(1). F(0) has three main subunits: a(1), b(2) and c(10-14). The alpha and beta chains form an alternating ring which encloses part of the gamma chain. F(1) is attached to F(0) by a central stalk formed by the gamma and epsilon chains, while a peripheral stalk is formed by the delta and b chains.</text>
</comment>
<comment type="subcellular location">
    <subcellularLocation>
        <location evidence="1">Cell inner membrane</location>
        <topology evidence="1">Single-pass membrane protein</topology>
    </subcellularLocation>
</comment>
<comment type="similarity">
    <text evidence="1">Belongs to the ATPase B chain family.</text>
</comment>
<reference key="1">
    <citation type="journal article" date="2005" name="Nucleic Acids Res.">
        <title>The genome sequence of Salmonella enterica serovar Choleraesuis, a highly invasive and resistant zoonotic pathogen.</title>
        <authorList>
            <person name="Chiu C.-H."/>
            <person name="Tang P."/>
            <person name="Chu C."/>
            <person name="Hu S."/>
            <person name="Bao Q."/>
            <person name="Yu J."/>
            <person name="Chou Y.-Y."/>
            <person name="Wang H.-S."/>
            <person name="Lee Y.-S."/>
        </authorList>
    </citation>
    <scope>NUCLEOTIDE SEQUENCE [LARGE SCALE GENOMIC DNA]</scope>
    <source>
        <strain>SC-B67</strain>
    </source>
</reference>
<evidence type="ECO:0000255" key="1">
    <source>
        <dbReference type="HAMAP-Rule" id="MF_01398"/>
    </source>
</evidence>
<accession>Q57HX5</accession>
<protein>
    <recommendedName>
        <fullName evidence="1">ATP synthase subunit b</fullName>
    </recommendedName>
    <alternativeName>
        <fullName evidence="1">ATP synthase F(0) sector subunit b</fullName>
    </alternativeName>
    <alternativeName>
        <fullName evidence="1">ATPase subunit I</fullName>
    </alternativeName>
    <alternativeName>
        <fullName evidence="1">F-type ATPase subunit b</fullName>
        <shortName evidence="1">F-ATPase subunit b</shortName>
    </alternativeName>
</protein>
<sequence length="156" mass="17365">MNLNATILGQAIAFILFVWFCMKYVWPPLMAAIEKRQKEIADGLASAERAHKDLDLAKASATDQLKKAKAEAQVIIEQANKRRAQILDEAKTEAEQERTKIVAQAQAEIEAERKRAREELRKQVAILAVAGAEKIIERSVDEAANSDIVDKLVAEL</sequence>
<keyword id="KW-0066">ATP synthesis</keyword>
<keyword id="KW-0997">Cell inner membrane</keyword>
<keyword id="KW-1003">Cell membrane</keyword>
<keyword id="KW-0138">CF(0)</keyword>
<keyword id="KW-0375">Hydrogen ion transport</keyword>
<keyword id="KW-0406">Ion transport</keyword>
<keyword id="KW-0472">Membrane</keyword>
<keyword id="KW-0812">Transmembrane</keyword>
<keyword id="KW-1133">Transmembrane helix</keyword>
<keyword id="KW-0813">Transport</keyword>
<name>ATPF_SALCH</name>
<gene>
    <name evidence="1" type="primary">atpF</name>
    <name type="ordered locus">SCH_3781</name>
</gene>